<accession>G4NEE4</accession>
<gene>
    <name evidence="4" type="primary">VELC</name>
    <name type="ORF">MGG_14719</name>
</gene>
<dbReference type="EMBL" id="CM001235">
    <property type="protein sequence ID" value="EHA49421.1"/>
    <property type="molecule type" value="Genomic_DNA"/>
</dbReference>
<dbReference type="RefSeq" id="XP_003719005.1">
    <property type="nucleotide sequence ID" value="XM_003718957.1"/>
</dbReference>
<dbReference type="SMR" id="G4NEE4"/>
<dbReference type="STRING" id="242507.G4NEE4"/>
<dbReference type="EnsemblFungi" id="MGG_14719T0">
    <property type="protein sequence ID" value="MGG_14719T0"/>
    <property type="gene ID" value="MGG_14719"/>
</dbReference>
<dbReference type="GeneID" id="5049346"/>
<dbReference type="KEGG" id="mgr:MGG_14719"/>
<dbReference type="VEuPathDB" id="FungiDB:MGG_14719"/>
<dbReference type="eggNOG" id="ENOG502RYR6">
    <property type="taxonomic scope" value="Eukaryota"/>
</dbReference>
<dbReference type="HOGENOM" id="CLU_022491_3_3_1"/>
<dbReference type="InParanoid" id="G4NEE4"/>
<dbReference type="OMA" id="ENGEDGC"/>
<dbReference type="OrthoDB" id="3056235at2759"/>
<dbReference type="PHI-base" id="PHI:4111"/>
<dbReference type="Proteomes" id="UP000009058">
    <property type="component" value="Chromosome 5"/>
</dbReference>
<dbReference type="GO" id="GO:0005634">
    <property type="term" value="C:nucleus"/>
    <property type="evidence" value="ECO:0007669"/>
    <property type="project" value="UniProtKB-SubCell"/>
</dbReference>
<dbReference type="GO" id="GO:0030435">
    <property type="term" value="P:sporulation resulting in formation of a cellular spore"/>
    <property type="evidence" value="ECO:0007669"/>
    <property type="project" value="UniProtKB-KW"/>
</dbReference>
<dbReference type="Gene3D" id="2.60.40.3960">
    <property type="entry name" value="Velvet domain"/>
    <property type="match status" value="1"/>
</dbReference>
<dbReference type="InterPro" id="IPR021740">
    <property type="entry name" value="Velvet"/>
</dbReference>
<dbReference type="InterPro" id="IPR037525">
    <property type="entry name" value="Velvet_dom"/>
</dbReference>
<dbReference type="InterPro" id="IPR038491">
    <property type="entry name" value="Velvet_dom_sf"/>
</dbReference>
<dbReference type="PANTHER" id="PTHR33572:SF17">
    <property type="entry name" value="SEXUAL DEVELOPMENT REGULATOR VELC"/>
    <property type="match status" value="1"/>
</dbReference>
<dbReference type="PANTHER" id="PTHR33572">
    <property type="entry name" value="SPORE DEVELOPMENT REGULATOR VOSA"/>
    <property type="match status" value="1"/>
</dbReference>
<dbReference type="Pfam" id="PF11754">
    <property type="entry name" value="Velvet"/>
    <property type="match status" value="2"/>
</dbReference>
<dbReference type="PROSITE" id="PS51821">
    <property type="entry name" value="VELVET"/>
    <property type="match status" value="1"/>
</dbReference>
<proteinExistence type="inferred from homology"/>
<evidence type="ECO:0000255" key="1">
    <source>
        <dbReference type="PROSITE-ProRule" id="PRU01165"/>
    </source>
</evidence>
<evidence type="ECO:0000256" key="2">
    <source>
        <dbReference type="SAM" id="MobiDB-lite"/>
    </source>
</evidence>
<evidence type="ECO:0000269" key="3">
    <source>
    </source>
</evidence>
<evidence type="ECO:0000303" key="4">
    <source>
    </source>
</evidence>
<evidence type="ECO:0000305" key="5"/>
<reference key="1">
    <citation type="journal article" date="2005" name="Nature">
        <title>The genome sequence of the rice blast fungus Magnaporthe grisea.</title>
        <authorList>
            <person name="Dean R.A."/>
            <person name="Talbot N.J."/>
            <person name="Ebbole D.J."/>
            <person name="Farman M.L."/>
            <person name="Mitchell T.K."/>
            <person name="Orbach M.J."/>
            <person name="Thon M.R."/>
            <person name="Kulkarni R."/>
            <person name="Xu J.-R."/>
            <person name="Pan H."/>
            <person name="Read N.D."/>
            <person name="Lee Y.-H."/>
            <person name="Carbone I."/>
            <person name="Brown D."/>
            <person name="Oh Y.Y."/>
            <person name="Donofrio N."/>
            <person name="Jeong J.S."/>
            <person name="Soanes D.M."/>
            <person name="Djonovic S."/>
            <person name="Kolomiets E."/>
            <person name="Rehmeyer C."/>
            <person name="Li W."/>
            <person name="Harding M."/>
            <person name="Kim S."/>
            <person name="Lebrun M.-H."/>
            <person name="Bohnert H."/>
            <person name="Coughlan S."/>
            <person name="Butler J."/>
            <person name="Calvo S.E."/>
            <person name="Ma L.-J."/>
            <person name="Nicol R."/>
            <person name="Purcell S."/>
            <person name="Nusbaum C."/>
            <person name="Galagan J.E."/>
            <person name="Birren B.W."/>
        </authorList>
    </citation>
    <scope>NUCLEOTIDE SEQUENCE [LARGE SCALE GENOMIC DNA]</scope>
    <source>
        <strain>70-15 / ATCC MYA-4617 / FGSC 8958</strain>
    </source>
</reference>
<reference key="2">
    <citation type="journal article" date="2014" name="Fungal Genet. Biol.">
        <title>Comparative functional analysis of the velvet gene family reveals unique roles in fungal development and pathogenicity in Magnaporthe oryzae.</title>
        <authorList>
            <person name="Kim H.J."/>
            <person name="Han J.H."/>
            <person name="Kim K.S."/>
            <person name="Lee Y.H."/>
        </authorList>
    </citation>
    <scope>FUNCTION</scope>
    <scope>DISRUPTION PHENOTYPE</scope>
</reference>
<name>VELC_PYRO7</name>
<comment type="function">
    <text evidence="3">Velvet-domain-containing protein that acts as a positive regulator of sexual development (PubMed:24632440). Plays an important role in pathogenicity through regulating positively appressorium-mediated penetration and invasive growth (PubMed:24632440).</text>
</comment>
<comment type="subcellular location">
    <subcellularLocation>
        <location evidence="5">Nucleus</location>
    </subcellularLocation>
</comment>
<comment type="disruption phenotype">
    <text evidence="3">Leads to reduced formation of conidia (PubMed:24632440). Exhibits significantly reduced pathogenicity, developing only a few small necrotic lesions (PubMed:24632440).</text>
</comment>
<comment type="similarity">
    <text evidence="5">Belongs to the velvet family. VelC subfamily.</text>
</comment>
<organism>
    <name type="scientific">Pyricularia oryzae (strain 70-15 / ATCC MYA-4617 / FGSC 8958)</name>
    <name type="common">Rice blast fungus</name>
    <name type="synonym">Magnaporthe oryzae</name>
    <dbReference type="NCBI Taxonomy" id="242507"/>
    <lineage>
        <taxon>Eukaryota</taxon>
        <taxon>Fungi</taxon>
        <taxon>Dikarya</taxon>
        <taxon>Ascomycota</taxon>
        <taxon>Pezizomycotina</taxon>
        <taxon>Sordariomycetes</taxon>
        <taxon>Sordariomycetidae</taxon>
        <taxon>Magnaporthales</taxon>
        <taxon>Pyriculariaceae</taxon>
        <taxon>Pyricularia</taxon>
    </lineage>
</organism>
<feature type="chain" id="PRO_0000435919" description="Sexual development regulator VELC">
    <location>
        <begin position="1"/>
        <end position="442"/>
    </location>
</feature>
<feature type="domain" description="Velvet" evidence="1">
    <location>
        <begin position="213"/>
        <end position="396"/>
    </location>
</feature>
<feature type="region of interest" description="Disordered" evidence="2">
    <location>
        <begin position="1"/>
        <end position="192"/>
    </location>
</feature>
<feature type="region of interest" description="Disordered" evidence="2">
    <location>
        <begin position="396"/>
        <end position="442"/>
    </location>
</feature>
<feature type="compositionally biased region" description="Pro residues" evidence="2">
    <location>
        <begin position="45"/>
        <end position="54"/>
    </location>
</feature>
<feature type="compositionally biased region" description="Low complexity" evidence="2">
    <location>
        <begin position="79"/>
        <end position="97"/>
    </location>
</feature>
<feature type="compositionally biased region" description="Gly residues" evidence="2">
    <location>
        <begin position="401"/>
        <end position="411"/>
    </location>
</feature>
<feature type="compositionally biased region" description="Basic residues" evidence="2">
    <location>
        <begin position="433"/>
        <end position="442"/>
    </location>
</feature>
<sequence length="442" mass="47456">MPVHFNQSVGMPPARDGARPPPIKGGLMGKLIPATYSPNGRHPRIAPPPPPTPPAGAGAGAGAAPPQRQLLQHSPTTAPGPRRPSNPSSPQHPQQPGIDRFPQIIPYQHEQPQRRPSRQQYSASPPVDYSFGKGPKQSGLDQSSSTSSSVSPKQEMKQMSIHNLLSSGDQDDQDDKSINNSNTARASSASLASLASPRSVLPPAAMPSPSPSFSTSEYHLHVRQQPVAARSCGFGERDRRVIDPPPIVQMTIDDPSATPDQMQQRLRHPFSVVHCSIYNETGEEDNSAMPEDYRQQRRLMGTLVASPFVGKDENGEDGCFFCFPDLSCRTPGSFRLKFSLVVINPADMRQGLRTPIAATAMSDVLVVYNAKDFPGMQASTPLTRKLKEQGCLISIKKGNEKGGGGGGGGPSGSRDQYSDDEYDDDGGGGSGRAGKRKRIRRS</sequence>
<protein>
    <recommendedName>
        <fullName evidence="5">Sexual development regulator VELC</fullName>
    </recommendedName>
</protein>
<keyword id="KW-0539">Nucleus</keyword>
<keyword id="KW-1185">Reference proteome</keyword>
<keyword id="KW-0749">Sporulation</keyword>
<keyword id="KW-0804">Transcription</keyword>
<keyword id="KW-0805">Transcription regulation</keyword>
<keyword id="KW-0843">Virulence</keyword>